<comment type="function">
    <text evidence="1">May positively contribute to the induction of apoptosis triggered by O(6)-methylguanine.</text>
</comment>
<comment type="subcellular location">
    <subcellularLocation>
        <location evidence="1">Cytoplasm</location>
    </subcellularLocation>
    <subcellularLocation>
        <location evidence="1">Nucleus</location>
    </subcellularLocation>
</comment>
<comment type="similarity">
    <text evidence="3">Belongs to the STPG1 family.</text>
</comment>
<comment type="sequence caution" evidence="3">
    <conflict type="erroneous initiation">
        <sequence resource="EMBL-CDS" id="AAH95808"/>
    </conflict>
    <text>Extended N-terminus.</text>
</comment>
<proteinExistence type="evidence at transcript level"/>
<gene>
    <name type="primary">stpg1</name>
    <name type="ORF">si:dkey-218f9.1</name>
</gene>
<protein>
    <recommendedName>
        <fullName>O(6)-methylguanine-induced apoptosis 2</fullName>
        <shortName>MAPO2</shortName>
    </recommendedName>
    <alternativeName>
        <fullName>Sperm-tail PG-rich repeat-containing protein 1</fullName>
    </alternativeName>
</protein>
<evidence type="ECO:0000250" key="1"/>
<evidence type="ECO:0000256" key="2">
    <source>
        <dbReference type="SAM" id="MobiDB-lite"/>
    </source>
</evidence>
<evidence type="ECO:0000305" key="3"/>
<organism>
    <name type="scientific">Danio rerio</name>
    <name type="common">Zebrafish</name>
    <name type="synonym">Brachydanio rerio</name>
    <dbReference type="NCBI Taxonomy" id="7955"/>
    <lineage>
        <taxon>Eukaryota</taxon>
        <taxon>Metazoa</taxon>
        <taxon>Chordata</taxon>
        <taxon>Craniata</taxon>
        <taxon>Vertebrata</taxon>
        <taxon>Euteleostomi</taxon>
        <taxon>Actinopterygii</taxon>
        <taxon>Neopterygii</taxon>
        <taxon>Teleostei</taxon>
        <taxon>Ostariophysi</taxon>
        <taxon>Cypriniformes</taxon>
        <taxon>Danionidae</taxon>
        <taxon>Danioninae</taxon>
        <taxon>Danio</taxon>
    </lineage>
</organism>
<accession>A5WUY6</accession>
<accession>Q501Z0</accession>
<feature type="chain" id="PRO_0000305173" description="O(6)-methylguanine-induced apoptosis 2">
    <location>
        <begin position="1"/>
        <end position="320"/>
    </location>
</feature>
<feature type="repeat" description="STPGR 1">
    <location>
        <begin position="49"/>
        <end position="82"/>
    </location>
</feature>
<feature type="repeat" description="STPGR 2">
    <location>
        <begin position="91"/>
        <end position="103"/>
    </location>
</feature>
<feature type="repeat" description="STPGR 3">
    <location>
        <begin position="132"/>
        <end position="163"/>
    </location>
</feature>
<feature type="repeat" description="STPGR 4">
    <location>
        <begin position="173"/>
        <end position="192"/>
    </location>
</feature>
<feature type="repeat" description="STPGR 5">
    <location>
        <begin position="213"/>
        <end position="233"/>
    </location>
</feature>
<feature type="repeat" description="STPGR 6">
    <location>
        <begin position="254"/>
        <end position="266"/>
    </location>
</feature>
<feature type="repeat" description="STPGR 7">
    <location>
        <begin position="294"/>
        <end position="305"/>
    </location>
</feature>
<feature type="region of interest" description="Disordered" evidence="2">
    <location>
        <begin position="46"/>
        <end position="91"/>
    </location>
</feature>
<feature type="region of interest" description="Disordered" evidence="2">
    <location>
        <begin position="207"/>
        <end position="226"/>
    </location>
</feature>
<feature type="compositionally biased region" description="Polar residues" evidence="2">
    <location>
        <begin position="66"/>
        <end position="76"/>
    </location>
</feature>
<feature type="sequence conflict" description="In Ref. 2; AAH95808." evidence="3" ref="2">
    <original>E</original>
    <variation>K</variation>
    <location>
        <position position="43"/>
    </location>
</feature>
<feature type="sequence conflict" description="In Ref. 2; AAH95808." evidence="3" ref="2">
    <original>V</original>
    <variation>F</variation>
    <location>
        <position position="166"/>
    </location>
</feature>
<feature type="sequence conflict" description="In Ref. 2; AAH95808." evidence="3" ref="2">
    <original>Q</original>
    <variation>L</variation>
    <location>
        <position position="222"/>
    </location>
</feature>
<dbReference type="EMBL" id="CR853286">
    <property type="protein sequence ID" value="CAN88297.1"/>
    <property type="molecule type" value="Genomic_DNA"/>
</dbReference>
<dbReference type="EMBL" id="BC095808">
    <property type="protein sequence ID" value="AAH95808.1"/>
    <property type="status" value="ALT_INIT"/>
    <property type="molecule type" value="mRNA"/>
</dbReference>
<dbReference type="FunCoup" id="A5WUY6">
    <property type="interactions" value="33"/>
</dbReference>
<dbReference type="PaxDb" id="7955-ENSDARP00000076652"/>
<dbReference type="AGR" id="ZFIN:ZDB-GENE-070705-373"/>
<dbReference type="ZFIN" id="ZDB-GENE-070705-373">
    <property type="gene designation" value="stpg1"/>
</dbReference>
<dbReference type="eggNOG" id="ENOG502R2KG">
    <property type="taxonomic scope" value="Eukaryota"/>
</dbReference>
<dbReference type="InParanoid" id="A5WUY6"/>
<dbReference type="PhylomeDB" id="A5WUY6"/>
<dbReference type="PRO" id="PR:A5WUY6"/>
<dbReference type="Proteomes" id="UP000000437">
    <property type="component" value="Unplaced"/>
</dbReference>
<dbReference type="GO" id="GO:0005737">
    <property type="term" value="C:cytoplasm"/>
    <property type="evidence" value="ECO:0007669"/>
    <property type="project" value="UniProtKB-SubCell"/>
</dbReference>
<dbReference type="GO" id="GO:0001939">
    <property type="term" value="C:female pronucleus"/>
    <property type="evidence" value="ECO:0000318"/>
    <property type="project" value="GO_Central"/>
</dbReference>
<dbReference type="GO" id="GO:0042585">
    <property type="term" value="C:germinal vesicle"/>
    <property type="evidence" value="ECO:0000318"/>
    <property type="project" value="GO_Central"/>
</dbReference>
<dbReference type="GO" id="GO:0001940">
    <property type="term" value="C:male pronucleus"/>
    <property type="evidence" value="ECO:0000318"/>
    <property type="project" value="GO_Central"/>
</dbReference>
<dbReference type="GO" id="GO:0003682">
    <property type="term" value="F:chromatin binding"/>
    <property type="evidence" value="ECO:0000318"/>
    <property type="project" value="GO_Central"/>
</dbReference>
<dbReference type="GO" id="GO:0042393">
    <property type="term" value="F:histone binding"/>
    <property type="evidence" value="ECO:0000318"/>
    <property type="project" value="GO_Central"/>
</dbReference>
<dbReference type="GO" id="GO:0006915">
    <property type="term" value="P:apoptotic process"/>
    <property type="evidence" value="ECO:0007669"/>
    <property type="project" value="UniProtKB-KW"/>
</dbReference>
<dbReference type="GO" id="GO:0044727">
    <property type="term" value="P:epigenetic programing of male pronucleus"/>
    <property type="evidence" value="ECO:0000318"/>
    <property type="project" value="GO_Central"/>
</dbReference>
<dbReference type="InterPro" id="IPR010736">
    <property type="entry name" value="SHIPPO-rpt"/>
</dbReference>
<dbReference type="PANTHER" id="PTHR35678">
    <property type="entry name" value="PROTEIN STPG4"/>
    <property type="match status" value="1"/>
</dbReference>
<dbReference type="PANTHER" id="PTHR35678:SF1">
    <property type="entry name" value="PROTEIN STPG4"/>
    <property type="match status" value="1"/>
</dbReference>
<dbReference type="Pfam" id="PF07004">
    <property type="entry name" value="SHIPPO-rpt"/>
    <property type="match status" value="3"/>
</dbReference>
<name>STPG1_DANRE</name>
<keyword id="KW-0053">Apoptosis</keyword>
<keyword id="KW-0963">Cytoplasm</keyword>
<keyword id="KW-0539">Nucleus</keyword>
<keyword id="KW-1185">Reference proteome</keyword>
<keyword id="KW-0677">Repeat</keyword>
<reference key="1">
    <citation type="journal article" date="2013" name="Nature">
        <title>The zebrafish reference genome sequence and its relationship to the human genome.</title>
        <authorList>
            <person name="Howe K."/>
            <person name="Clark M.D."/>
            <person name="Torroja C.F."/>
            <person name="Torrance J."/>
            <person name="Berthelot C."/>
            <person name="Muffato M."/>
            <person name="Collins J.E."/>
            <person name="Humphray S."/>
            <person name="McLaren K."/>
            <person name="Matthews L."/>
            <person name="McLaren S."/>
            <person name="Sealy I."/>
            <person name="Caccamo M."/>
            <person name="Churcher C."/>
            <person name="Scott C."/>
            <person name="Barrett J.C."/>
            <person name="Koch R."/>
            <person name="Rauch G.J."/>
            <person name="White S."/>
            <person name="Chow W."/>
            <person name="Kilian B."/>
            <person name="Quintais L.T."/>
            <person name="Guerra-Assuncao J.A."/>
            <person name="Zhou Y."/>
            <person name="Gu Y."/>
            <person name="Yen J."/>
            <person name="Vogel J.H."/>
            <person name="Eyre T."/>
            <person name="Redmond S."/>
            <person name="Banerjee R."/>
            <person name="Chi J."/>
            <person name="Fu B."/>
            <person name="Langley E."/>
            <person name="Maguire S.F."/>
            <person name="Laird G.K."/>
            <person name="Lloyd D."/>
            <person name="Kenyon E."/>
            <person name="Donaldson S."/>
            <person name="Sehra H."/>
            <person name="Almeida-King J."/>
            <person name="Loveland J."/>
            <person name="Trevanion S."/>
            <person name="Jones M."/>
            <person name="Quail M."/>
            <person name="Willey D."/>
            <person name="Hunt A."/>
            <person name="Burton J."/>
            <person name="Sims S."/>
            <person name="McLay K."/>
            <person name="Plumb B."/>
            <person name="Davis J."/>
            <person name="Clee C."/>
            <person name="Oliver K."/>
            <person name="Clark R."/>
            <person name="Riddle C."/>
            <person name="Elliot D."/>
            <person name="Threadgold G."/>
            <person name="Harden G."/>
            <person name="Ware D."/>
            <person name="Begum S."/>
            <person name="Mortimore B."/>
            <person name="Kerry G."/>
            <person name="Heath P."/>
            <person name="Phillimore B."/>
            <person name="Tracey A."/>
            <person name="Corby N."/>
            <person name="Dunn M."/>
            <person name="Johnson C."/>
            <person name="Wood J."/>
            <person name="Clark S."/>
            <person name="Pelan S."/>
            <person name="Griffiths G."/>
            <person name="Smith M."/>
            <person name="Glithero R."/>
            <person name="Howden P."/>
            <person name="Barker N."/>
            <person name="Lloyd C."/>
            <person name="Stevens C."/>
            <person name="Harley J."/>
            <person name="Holt K."/>
            <person name="Panagiotidis G."/>
            <person name="Lovell J."/>
            <person name="Beasley H."/>
            <person name="Henderson C."/>
            <person name="Gordon D."/>
            <person name="Auger K."/>
            <person name="Wright D."/>
            <person name="Collins J."/>
            <person name="Raisen C."/>
            <person name="Dyer L."/>
            <person name="Leung K."/>
            <person name="Robertson L."/>
            <person name="Ambridge K."/>
            <person name="Leongamornlert D."/>
            <person name="McGuire S."/>
            <person name="Gilderthorp R."/>
            <person name="Griffiths C."/>
            <person name="Manthravadi D."/>
            <person name="Nichol S."/>
            <person name="Barker G."/>
            <person name="Whitehead S."/>
            <person name="Kay M."/>
            <person name="Brown J."/>
            <person name="Murnane C."/>
            <person name="Gray E."/>
            <person name="Humphries M."/>
            <person name="Sycamore N."/>
            <person name="Barker D."/>
            <person name="Saunders D."/>
            <person name="Wallis J."/>
            <person name="Babbage A."/>
            <person name="Hammond S."/>
            <person name="Mashreghi-Mohammadi M."/>
            <person name="Barr L."/>
            <person name="Martin S."/>
            <person name="Wray P."/>
            <person name="Ellington A."/>
            <person name="Matthews N."/>
            <person name="Ellwood M."/>
            <person name="Woodmansey R."/>
            <person name="Clark G."/>
            <person name="Cooper J."/>
            <person name="Tromans A."/>
            <person name="Grafham D."/>
            <person name="Skuce C."/>
            <person name="Pandian R."/>
            <person name="Andrews R."/>
            <person name="Harrison E."/>
            <person name="Kimberley A."/>
            <person name="Garnett J."/>
            <person name="Fosker N."/>
            <person name="Hall R."/>
            <person name="Garner P."/>
            <person name="Kelly D."/>
            <person name="Bird C."/>
            <person name="Palmer S."/>
            <person name="Gehring I."/>
            <person name="Berger A."/>
            <person name="Dooley C.M."/>
            <person name="Ersan-Urun Z."/>
            <person name="Eser C."/>
            <person name="Geiger H."/>
            <person name="Geisler M."/>
            <person name="Karotki L."/>
            <person name="Kirn A."/>
            <person name="Konantz J."/>
            <person name="Konantz M."/>
            <person name="Oberlander M."/>
            <person name="Rudolph-Geiger S."/>
            <person name="Teucke M."/>
            <person name="Lanz C."/>
            <person name="Raddatz G."/>
            <person name="Osoegawa K."/>
            <person name="Zhu B."/>
            <person name="Rapp A."/>
            <person name="Widaa S."/>
            <person name="Langford C."/>
            <person name="Yang F."/>
            <person name="Schuster S.C."/>
            <person name="Carter N.P."/>
            <person name="Harrow J."/>
            <person name="Ning Z."/>
            <person name="Herrero J."/>
            <person name="Searle S.M."/>
            <person name="Enright A."/>
            <person name="Geisler R."/>
            <person name="Plasterk R.H."/>
            <person name="Lee C."/>
            <person name="Westerfield M."/>
            <person name="de Jong P.J."/>
            <person name="Zon L.I."/>
            <person name="Postlethwait J.H."/>
            <person name="Nusslein-Volhard C."/>
            <person name="Hubbard T.J."/>
            <person name="Roest Crollius H."/>
            <person name="Rogers J."/>
            <person name="Stemple D.L."/>
        </authorList>
    </citation>
    <scope>NUCLEOTIDE SEQUENCE [LARGE SCALE GENOMIC DNA]</scope>
    <source>
        <strain>Tuebingen</strain>
    </source>
</reference>
<reference key="2">
    <citation type="submission" date="2005-10" db="EMBL/GenBank/DDBJ databases">
        <authorList>
            <consortium name="NIH - Xenopus Gene Collection (XGC) project"/>
        </authorList>
    </citation>
    <scope>NUCLEOTIDE SEQUENCE [LARGE SCALE MRNA]</scope>
    <source>
        <tissue>Testis</tissue>
    </source>
</reference>
<sequence>MGKLHRGLAEFNGCASSIPPKYQTVIISNEEKKGFSSQSRRFEEYLNESPGPGSYLSHSPAEGCSPSFSKRGTGSFASKGGRVPRSFQRLSPGPDAYNLQMSLLHKHDFNRGESRIFRLPYALKKEKPNNENPAPNQYDVSYRAVDKNSTISGESAFRSKTRRSAVVSDKFKGPSPCHYKVSDVLVQKSPQALVSCFKSKTARIQSPVRNNIPGPGTYNPHQPPEPVKRTVLPRRYYLGLSAPPLIPEKVPPFPGPGHYDIVNYNRPVKHMVSSAAFLSGTNRHMQEVKGQDIPGPGFYEPTVLSKTSFLYNPAKLWIPA</sequence>